<sequence>MLTRKQHELLTFIQTRLEDSGISPSFEEMKEALDLKSKSGVHRLISALEERGFIRRLPNRARALEVLRQPDSAVGKAAPVSQREAANTNSALPPLRAAPKAAPAPANDVIELPLHGKIAAGVPIEALETTATLPVPAALLGAGEHYALEVSGDSMVEAGIFDGDYALVRKTDVARDGEIVVALVRGEEATLKYLHREKGMVRLDPANAAYDPQYYRPEEVAVQGKLAGLLRRYH</sequence>
<name>LEXA_NOVAD</name>
<reference key="1">
    <citation type="submission" date="2006-01" db="EMBL/GenBank/DDBJ databases">
        <title>Complete sequence of Novosphingobium aromaticivorans DSM 12444.</title>
        <authorList>
            <consortium name="US DOE Joint Genome Institute"/>
            <person name="Copeland A."/>
            <person name="Lucas S."/>
            <person name="Lapidus A."/>
            <person name="Barry K."/>
            <person name="Detter J.C."/>
            <person name="Glavina T."/>
            <person name="Hammon N."/>
            <person name="Israni S."/>
            <person name="Pitluck S."/>
            <person name="Chain P."/>
            <person name="Malfatti S."/>
            <person name="Shin M."/>
            <person name="Vergez L."/>
            <person name="Schmutz J."/>
            <person name="Larimer F."/>
            <person name="Land M."/>
            <person name="Kyrpides N."/>
            <person name="Ivanova N."/>
            <person name="Fredrickson J."/>
            <person name="Balkwill D."/>
            <person name="Romine M.F."/>
            <person name="Richardson P."/>
        </authorList>
    </citation>
    <scope>NUCLEOTIDE SEQUENCE [LARGE SCALE GENOMIC DNA]</scope>
    <source>
        <strain>ATCC 700278 / DSM 12444 / CCUG 56034 / CIP 105152 / NBRC 16084 / F199</strain>
    </source>
</reference>
<dbReference type="EC" id="3.4.21.88" evidence="1"/>
<dbReference type="EMBL" id="CP000248">
    <property type="protein sequence ID" value="ABD26468.1"/>
    <property type="molecule type" value="Genomic_DNA"/>
</dbReference>
<dbReference type="RefSeq" id="WP_011445677.1">
    <property type="nucleotide sequence ID" value="NC_007794.1"/>
</dbReference>
<dbReference type="SMR" id="Q2G6Q5"/>
<dbReference type="STRING" id="279238.Saro_2029"/>
<dbReference type="MEROPS" id="S24.001"/>
<dbReference type="KEGG" id="nar:Saro_2029"/>
<dbReference type="eggNOG" id="COG1974">
    <property type="taxonomic scope" value="Bacteria"/>
</dbReference>
<dbReference type="HOGENOM" id="CLU_066192_45_2_5"/>
<dbReference type="Proteomes" id="UP000009134">
    <property type="component" value="Chromosome"/>
</dbReference>
<dbReference type="GO" id="GO:0003677">
    <property type="term" value="F:DNA binding"/>
    <property type="evidence" value="ECO:0007669"/>
    <property type="project" value="UniProtKB-UniRule"/>
</dbReference>
<dbReference type="GO" id="GO:0004252">
    <property type="term" value="F:serine-type endopeptidase activity"/>
    <property type="evidence" value="ECO:0007669"/>
    <property type="project" value="UniProtKB-UniRule"/>
</dbReference>
<dbReference type="GO" id="GO:0006281">
    <property type="term" value="P:DNA repair"/>
    <property type="evidence" value="ECO:0007669"/>
    <property type="project" value="UniProtKB-UniRule"/>
</dbReference>
<dbReference type="GO" id="GO:0006260">
    <property type="term" value="P:DNA replication"/>
    <property type="evidence" value="ECO:0007669"/>
    <property type="project" value="UniProtKB-UniRule"/>
</dbReference>
<dbReference type="GO" id="GO:0045892">
    <property type="term" value="P:negative regulation of DNA-templated transcription"/>
    <property type="evidence" value="ECO:0007669"/>
    <property type="project" value="UniProtKB-UniRule"/>
</dbReference>
<dbReference type="GO" id="GO:0006508">
    <property type="term" value="P:proteolysis"/>
    <property type="evidence" value="ECO:0007669"/>
    <property type="project" value="InterPro"/>
</dbReference>
<dbReference type="GO" id="GO:0009432">
    <property type="term" value="P:SOS response"/>
    <property type="evidence" value="ECO:0007669"/>
    <property type="project" value="UniProtKB-UniRule"/>
</dbReference>
<dbReference type="CDD" id="cd06529">
    <property type="entry name" value="S24_LexA-like"/>
    <property type="match status" value="1"/>
</dbReference>
<dbReference type="FunFam" id="2.10.109.10:FF:000001">
    <property type="entry name" value="LexA repressor"/>
    <property type="match status" value="1"/>
</dbReference>
<dbReference type="Gene3D" id="2.10.109.10">
    <property type="entry name" value="Umud Fragment, subunit A"/>
    <property type="match status" value="1"/>
</dbReference>
<dbReference type="Gene3D" id="1.10.10.10">
    <property type="entry name" value="Winged helix-like DNA-binding domain superfamily/Winged helix DNA-binding domain"/>
    <property type="match status" value="1"/>
</dbReference>
<dbReference type="HAMAP" id="MF_00015">
    <property type="entry name" value="LexA"/>
    <property type="match status" value="1"/>
</dbReference>
<dbReference type="InterPro" id="IPR006200">
    <property type="entry name" value="LexA"/>
</dbReference>
<dbReference type="InterPro" id="IPR039418">
    <property type="entry name" value="LexA-like"/>
</dbReference>
<dbReference type="InterPro" id="IPR036286">
    <property type="entry name" value="LexA/Signal_pep-like_sf"/>
</dbReference>
<dbReference type="InterPro" id="IPR006199">
    <property type="entry name" value="LexA_DNA-bd_dom"/>
</dbReference>
<dbReference type="InterPro" id="IPR050077">
    <property type="entry name" value="LexA_repressor"/>
</dbReference>
<dbReference type="InterPro" id="IPR006197">
    <property type="entry name" value="Peptidase_S24_LexA"/>
</dbReference>
<dbReference type="InterPro" id="IPR015927">
    <property type="entry name" value="Peptidase_S24_S26A/B/C"/>
</dbReference>
<dbReference type="InterPro" id="IPR036388">
    <property type="entry name" value="WH-like_DNA-bd_sf"/>
</dbReference>
<dbReference type="InterPro" id="IPR036390">
    <property type="entry name" value="WH_DNA-bd_sf"/>
</dbReference>
<dbReference type="NCBIfam" id="TIGR00498">
    <property type="entry name" value="lexA"/>
    <property type="match status" value="1"/>
</dbReference>
<dbReference type="PANTHER" id="PTHR33516">
    <property type="entry name" value="LEXA REPRESSOR"/>
    <property type="match status" value="1"/>
</dbReference>
<dbReference type="PANTHER" id="PTHR33516:SF2">
    <property type="entry name" value="LEXA REPRESSOR-RELATED"/>
    <property type="match status" value="1"/>
</dbReference>
<dbReference type="Pfam" id="PF01726">
    <property type="entry name" value="LexA_DNA_bind"/>
    <property type="match status" value="1"/>
</dbReference>
<dbReference type="Pfam" id="PF00717">
    <property type="entry name" value="Peptidase_S24"/>
    <property type="match status" value="1"/>
</dbReference>
<dbReference type="PRINTS" id="PR00726">
    <property type="entry name" value="LEXASERPTASE"/>
</dbReference>
<dbReference type="SUPFAM" id="SSF51306">
    <property type="entry name" value="LexA/Signal peptidase"/>
    <property type="match status" value="1"/>
</dbReference>
<dbReference type="SUPFAM" id="SSF46785">
    <property type="entry name" value="Winged helix' DNA-binding domain"/>
    <property type="match status" value="1"/>
</dbReference>
<gene>
    <name evidence="1" type="primary">lexA</name>
    <name type="ordered locus">Saro_2029</name>
</gene>
<accession>Q2G6Q5</accession>
<organism>
    <name type="scientific">Novosphingobium aromaticivorans (strain ATCC 700278 / DSM 12444 / CCUG 56034 / CIP 105152 / NBRC 16084 / F199)</name>
    <dbReference type="NCBI Taxonomy" id="279238"/>
    <lineage>
        <taxon>Bacteria</taxon>
        <taxon>Pseudomonadati</taxon>
        <taxon>Pseudomonadota</taxon>
        <taxon>Alphaproteobacteria</taxon>
        <taxon>Sphingomonadales</taxon>
        <taxon>Sphingomonadaceae</taxon>
        <taxon>Novosphingobium</taxon>
    </lineage>
</organism>
<comment type="function">
    <text evidence="1">Represses a number of genes involved in the response to DNA damage (SOS response), including recA and lexA. In the presence of single-stranded DNA, RecA interacts with LexA causing an autocatalytic cleavage which disrupts the DNA-binding part of LexA, leading to derepression of the SOS regulon and eventually DNA repair.</text>
</comment>
<comment type="catalytic activity">
    <reaction evidence="1">
        <text>Hydrolysis of Ala-|-Gly bond in repressor LexA.</text>
        <dbReference type="EC" id="3.4.21.88"/>
    </reaction>
</comment>
<comment type="subunit">
    <text evidence="1">Homodimer.</text>
</comment>
<comment type="similarity">
    <text evidence="1">Belongs to the peptidase S24 family.</text>
</comment>
<keyword id="KW-0068">Autocatalytic cleavage</keyword>
<keyword id="KW-0227">DNA damage</keyword>
<keyword id="KW-0234">DNA repair</keyword>
<keyword id="KW-0235">DNA replication</keyword>
<keyword id="KW-0238">DNA-binding</keyword>
<keyword id="KW-0378">Hydrolase</keyword>
<keyword id="KW-1185">Reference proteome</keyword>
<keyword id="KW-0678">Repressor</keyword>
<keyword id="KW-0742">SOS response</keyword>
<keyword id="KW-0804">Transcription</keyword>
<keyword id="KW-0805">Transcription regulation</keyword>
<proteinExistence type="inferred from homology"/>
<evidence type="ECO:0000255" key="1">
    <source>
        <dbReference type="HAMAP-Rule" id="MF_00015"/>
    </source>
</evidence>
<evidence type="ECO:0000256" key="2">
    <source>
        <dbReference type="SAM" id="MobiDB-lite"/>
    </source>
</evidence>
<protein>
    <recommendedName>
        <fullName evidence="1">LexA repressor</fullName>
        <ecNumber evidence="1">3.4.21.88</ecNumber>
    </recommendedName>
</protein>
<feature type="chain" id="PRO_1000001310" description="LexA repressor">
    <location>
        <begin position="1"/>
        <end position="234"/>
    </location>
</feature>
<feature type="DNA-binding region" description="H-T-H motif" evidence="1">
    <location>
        <begin position="26"/>
        <end position="46"/>
    </location>
</feature>
<feature type="region of interest" description="Disordered" evidence="2">
    <location>
        <begin position="73"/>
        <end position="100"/>
    </location>
</feature>
<feature type="compositionally biased region" description="Low complexity" evidence="2">
    <location>
        <begin position="91"/>
        <end position="100"/>
    </location>
</feature>
<feature type="active site" description="For autocatalytic cleavage activity" evidence="1">
    <location>
        <position position="154"/>
    </location>
</feature>
<feature type="active site" description="For autocatalytic cleavage activity" evidence="1">
    <location>
        <position position="192"/>
    </location>
</feature>
<feature type="site" description="Cleavage; by autolysis" evidence="1">
    <location>
        <begin position="120"/>
        <end position="121"/>
    </location>
</feature>